<protein>
    <recommendedName>
        <fullName evidence="2">Elongation factor Tu 2</fullName>
        <shortName evidence="2">EF-Tu 2</shortName>
        <ecNumber evidence="2">3.6.5.3</ecNumber>
    </recommendedName>
</protein>
<accession>Q8EK70</accession>
<comment type="function">
    <text evidence="2">GTP hydrolase that promotes the GTP-dependent binding of aminoacyl-tRNA to the A-site of ribosomes during protein biosynthesis.</text>
</comment>
<comment type="catalytic activity">
    <reaction evidence="2">
        <text>GTP + H2O = GDP + phosphate + H(+)</text>
        <dbReference type="Rhea" id="RHEA:19669"/>
        <dbReference type="ChEBI" id="CHEBI:15377"/>
        <dbReference type="ChEBI" id="CHEBI:15378"/>
        <dbReference type="ChEBI" id="CHEBI:37565"/>
        <dbReference type="ChEBI" id="CHEBI:43474"/>
        <dbReference type="ChEBI" id="CHEBI:58189"/>
        <dbReference type="EC" id="3.6.5.3"/>
    </reaction>
    <physiologicalReaction direction="left-to-right" evidence="2">
        <dbReference type="Rhea" id="RHEA:19670"/>
    </physiologicalReaction>
</comment>
<comment type="subunit">
    <text evidence="2">Monomer.</text>
</comment>
<comment type="subcellular location">
    <subcellularLocation>
        <location evidence="2">Cytoplasm</location>
    </subcellularLocation>
</comment>
<comment type="similarity">
    <text evidence="2">Belongs to the TRAFAC class translation factor GTPase superfamily. Classic translation factor GTPase family. EF-Tu/EF-1A subfamily.</text>
</comment>
<gene>
    <name evidence="2" type="primary">tuf2</name>
    <name type="synonym">tufA</name>
    <name type="ordered locus">SO_0229</name>
</gene>
<sequence>MAKAKFERSKPHVNVGTIGHVDHGKTTLTAAISHVLAKTYGGEAKDFSQIDNAPEERERGITINTSHIEYDTPSRHYAHVDCPGHADYVKNMITGAAQMDGAILVVASTDGPMPQTREHILLSRQVGVPFIIVFMNKCDMVDDAELLELVEMEVRELLSEYDFPGDDLPVIQGSALKALEGEPEWEAKILELAAALDSYIPEPERDIDKPFLMPIEDVFSISGRGTVVTGRVERGIVRVGDEVEIVGIRTTTKTTCTGVEMFRKLLDEGRAGENCGILLRGTKRDDVERGQVLSKPGSINPHTTFESEVYVLSKEEGGRHTPFFKGYRPQFYFRTTDVTGTIELPEGVEMVMPGDNIKMVVTLICPIAMDEGLRFAIREGGRTVGAGVVAKIIA</sequence>
<organism>
    <name type="scientific">Shewanella oneidensis (strain ATCC 700550 / JCM 31522 / CIP 106686 / LMG 19005 / NCIMB 14063 / MR-1)</name>
    <dbReference type="NCBI Taxonomy" id="211586"/>
    <lineage>
        <taxon>Bacteria</taxon>
        <taxon>Pseudomonadati</taxon>
        <taxon>Pseudomonadota</taxon>
        <taxon>Gammaproteobacteria</taxon>
        <taxon>Alteromonadales</taxon>
        <taxon>Shewanellaceae</taxon>
        <taxon>Shewanella</taxon>
    </lineage>
</organism>
<evidence type="ECO:0000250" key="1"/>
<evidence type="ECO:0000255" key="2">
    <source>
        <dbReference type="HAMAP-Rule" id="MF_00118"/>
    </source>
</evidence>
<reference key="1">
    <citation type="journal article" date="2002" name="Nat. Biotechnol.">
        <title>Genome sequence of the dissimilatory metal ion-reducing bacterium Shewanella oneidensis.</title>
        <authorList>
            <person name="Heidelberg J.F."/>
            <person name="Paulsen I.T."/>
            <person name="Nelson K.E."/>
            <person name="Gaidos E.J."/>
            <person name="Nelson W.C."/>
            <person name="Read T.D."/>
            <person name="Eisen J.A."/>
            <person name="Seshadri R."/>
            <person name="Ward N.L."/>
            <person name="Methe B.A."/>
            <person name="Clayton R.A."/>
            <person name="Meyer T."/>
            <person name="Tsapin A."/>
            <person name="Scott J."/>
            <person name="Beanan M.J."/>
            <person name="Brinkac L.M."/>
            <person name="Daugherty S.C."/>
            <person name="DeBoy R.T."/>
            <person name="Dodson R.J."/>
            <person name="Durkin A.S."/>
            <person name="Haft D.H."/>
            <person name="Kolonay J.F."/>
            <person name="Madupu R."/>
            <person name="Peterson J.D."/>
            <person name="Umayam L.A."/>
            <person name="White O."/>
            <person name="Wolf A.M."/>
            <person name="Vamathevan J.J."/>
            <person name="Weidman J.F."/>
            <person name="Impraim M."/>
            <person name="Lee K."/>
            <person name="Berry K.J."/>
            <person name="Lee C."/>
            <person name="Mueller J."/>
            <person name="Khouri H.M."/>
            <person name="Gill J."/>
            <person name="Utterback T.R."/>
            <person name="McDonald L.A."/>
            <person name="Feldblyum T.V."/>
            <person name="Smith H.O."/>
            <person name="Venter J.C."/>
            <person name="Nealson K.H."/>
            <person name="Fraser C.M."/>
        </authorList>
    </citation>
    <scope>NUCLEOTIDE SEQUENCE [LARGE SCALE GENOMIC DNA]</scope>
    <source>
        <strain>ATCC 700550 / JCM 31522 / CIP 106686 / LMG 19005 / NCIMB 14063 / MR-1</strain>
    </source>
</reference>
<dbReference type="EC" id="3.6.5.3" evidence="2"/>
<dbReference type="EMBL" id="AE014299">
    <property type="protein sequence ID" value="AAN53314.1"/>
    <property type="molecule type" value="Genomic_DNA"/>
</dbReference>
<dbReference type="RefSeq" id="NP_715869.1">
    <property type="nucleotide sequence ID" value="NC_004347.2"/>
</dbReference>
<dbReference type="RefSeq" id="WP_011070615.1">
    <property type="nucleotide sequence ID" value="NC_004347.2"/>
</dbReference>
<dbReference type="SMR" id="Q8EK70"/>
<dbReference type="STRING" id="211586.SO_0229"/>
<dbReference type="PaxDb" id="211586-SO_0229"/>
<dbReference type="KEGG" id="son:SO_0229"/>
<dbReference type="PATRIC" id="fig|211586.12.peg.217"/>
<dbReference type="eggNOG" id="COG0050">
    <property type="taxonomic scope" value="Bacteria"/>
</dbReference>
<dbReference type="HOGENOM" id="CLU_007265_0_1_6"/>
<dbReference type="OrthoDB" id="9803139at2"/>
<dbReference type="PhylomeDB" id="Q8EK70"/>
<dbReference type="BioCyc" id="SONE211586:G1GMP-218-MONOMER"/>
<dbReference type="Proteomes" id="UP000008186">
    <property type="component" value="Chromosome"/>
</dbReference>
<dbReference type="GO" id="GO:0005737">
    <property type="term" value="C:cytoplasm"/>
    <property type="evidence" value="ECO:0007669"/>
    <property type="project" value="UniProtKB-SubCell"/>
</dbReference>
<dbReference type="GO" id="GO:0005525">
    <property type="term" value="F:GTP binding"/>
    <property type="evidence" value="ECO:0007669"/>
    <property type="project" value="UniProtKB-UniRule"/>
</dbReference>
<dbReference type="GO" id="GO:0003924">
    <property type="term" value="F:GTPase activity"/>
    <property type="evidence" value="ECO:0007669"/>
    <property type="project" value="InterPro"/>
</dbReference>
<dbReference type="GO" id="GO:0097216">
    <property type="term" value="F:guanosine tetraphosphate binding"/>
    <property type="evidence" value="ECO:0007669"/>
    <property type="project" value="UniProtKB-ARBA"/>
</dbReference>
<dbReference type="GO" id="GO:0003746">
    <property type="term" value="F:translation elongation factor activity"/>
    <property type="evidence" value="ECO:0000318"/>
    <property type="project" value="GO_Central"/>
</dbReference>
<dbReference type="GO" id="GO:0006414">
    <property type="term" value="P:translational elongation"/>
    <property type="evidence" value="ECO:0000318"/>
    <property type="project" value="GO_Central"/>
</dbReference>
<dbReference type="CDD" id="cd01884">
    <property type="entry name" value="EF_Tu"/>
    <property type="match status" value="1"/>
</dbReference>
<dbReference type="CDD" id="cd03697">
    <property type="entry name" value="EFTU_II"/>
    <property type="match status" value="1"/>
</dbReference>
<dbReference type="CDD" id="cd03707">
    <property type="entry name" value="EFTU_III"/>
    <property type="match status" value="1"/>
</dbReference>
<dbReference type="FunFam" id="2.40.30.10:FF:000001">
    <property type="entry name" value="Elongation factor Tu"/>
    <property type="match status" value="1"/>
</dbReference>
<dbReference type="FunFam" id="3.40.50.300:FF:000003">
    <property type="entry name" value="Elongation factor Tu"/>
    <property type="match status" value="1"/>
</dbReference>
<dbReference type="Gene3D" id="3.40.50.300">
    <property type="entry name" value="P-loop containing nucleotide triphosphate hydrolases"/>
    <property type="match status" value="1"/>
</dbReference>
<dbReference type="Gene3D" id="2.40.30.10">
    <property type="entry name" value="Translation factors"/>
    <property type="match status" value="2"/>
</dbReference>
<dbReference type="HAMAP" id="MF_00118_B">
    <property type="entry name" value="EF_Tu_B"/>
    <property type="match status" value="1"/>
</dbReference>
<dbReference type="InterPro" id="IPR041709">
    <property type="entry name" value="EF-Tu_GTP-bd"/>
</dbReference>
<dbReference type="InterPro" id="IPR050055">
    <property type="entry name" value="EF-Tu_GTPase"/>
</dbReference>
<dbReference type="InterPro" id="IPR004161">
    <property type="entry name" value="EFTu-like_2"/>
</dbReference>
<dbReference type="InterPro" id="IPR033720">
    <property type="entry name" value="EFTU_2"/>
</dbReference>
<dbReference type="InterPro" id="IPR031157">
    <property type="entry name" value="G_TR_CS"/>
</dbReference>
<dbReference type="InterPro" id="IPR027417">
    <property type="entry name" value="P-loop_NTPase"/>
</dbReference>
<dbReference type="InterPro" id="IPR005225">
    <property type="entry name" value="Small_GTP-bd"/>
</dbReference>
<dbReference type="InterPro" id="IPR000795">
    <property type="entry name" value="T_Tr_GTP-bd_dom"/>
</dbReference>
<dbReference type="InterPro" id="IPR009000">
    <property type="entry name" value="Transl_B-barrel_sf"/>
</dbReference>
<dbReference type="InterPro" id="IPR009001">
    <property type="entry name" value="Transl_elong_EF1A/Init_IF2_C"/>
</dbReference>
<dbReference type="InterPro" id="IPR004541">
    <property type="entry name" value="Transl_elong_EFTu/EF1A_bac/org"/>
</dbReference>
<dbReference type="InterPro" id="IPR004160">
    <property type="entry name" value="Transl_elong_EFTu/EF1A_C"/>
</dbReference>
<dbReference type="NCBIfam" id="TIGR00485">
    <property type="entry name" value="EF-Tu"/>
    <property type="match status" value="1"/>
</dbReference>
<dbReference type="NCBIfam" id="NF000766">
    <property type="entry name" value="PRK00049.1"/>
    <property type="match status" value="1"/>
</dbReference>
<dbReference type="NCBIfam" id="NF009372">
    <property type="entry name" value="PRK12735.1"/>
    <property type="match status" value="1"/>
</dbReference>
<dbReference type="NCBIfam" id="NF009373">
    <property type="entry name" value="PRK12736.1"/>
    <property type="match status" value="1"/>
</dbReference>
<dbReference type="NCBIfam" id="TIGR00231">
    <property type="entry name" value="small_GTP"/>
    <property type="match status" value="1"/>
</dbReference>
<dbReference type="PANTHER" id="PTHR43721:SF22">
    <property type="entry name" value="ELONGATION FACTOR TU, MITOCHONDRIAL"/>
    <property type="match status" value="1"/>
</dbReference>
<dbReference type="PANTHER" id="PTHR43721">
    <property type="entry name" value="ELONGATION FACTOR TU-RELATED"/>
    <property type="match status" value="1"/>
</dbReference>
<dbReference type="Pfam" id="PF00009">
    <property type="entry name" value="GTP_EFTU"/>
    <property type="match status" value="1"/>
</dbReference>
<dbReference type="Pfam" id="PF03144">
    <property type="entry name" value="GTP_EFTU_D2"/>
    <property type="match status" value="1"/>
</dbReference>
<dbReference type="Pfam" id="PF03143">
    <property type="entry name" value="GTP_EFTU_D3"/>
    <property type="match status" value="1"/>
</dbReference>
<dbReference type="PRINTS" id="PR00315">
    <property type="entry name" value="ELONGATNFCT"/>
</dbReference>
<dbReference type="SUPFAM" id="SSF50465">
    <property type="entry name" value="EF-Tu/eEF-1alpha/eIF2-gamma C-terminal domain"/>
    <property type="match status" value="1"/>
</dbReference>
<dbReference type="SUPFAM" id="SSF52540">
    <property type="entry name" value="P-loop containing nucleoside triphosphate hydrolases"/>
    <property type="match status" value="1"/>
</dbReference>
<dbReference type="SUPFAM" id="SSF50447">
    <property type="entry name" value="Translation proteins"/>
    <property type="match status" value="1"/>
</dbReference>
<dbReference type="PROSITE" id="PS00301">
    <property type="entry name" value="G_TR_1"/>
    <property type="match status" value="1"/>
</dbReference>
<dbReference type="PROSITE" id="PS51722">
    <property type="entry name" value="G_TR_2"/>
    <property type="match status" value="1"/>
</dbReference>
<feature type="chain" id="PRO_0000337530" description="Elongation factor Tu 2">
    <location>
        <begin position="1"/>
        <end position="394"/>
    </location>
</feature>
<feature type="domain" description="tr-type G">
    <location>
        <begin position="10"/>
        <end position="204"/>
    </location>
</feature>
<feature type="region of interest" description="G1" evidence="1">
    <location>
        <begin position="19"/>
        <end position="26"/>
    </location>
</feature>
<feature type="region of interest" description="G2" evidence="1">
    <location>
        <begin position="60"/>
        <end position="64"/>
    </location>
</feature>
<feature type="region of interest" description="G3" evidence="1">
    <location>
        <begin position="81"/>
        <end position="84"/>
    </location>
</feature>
<feature type="region of interest" description="G4" evidence="1">
    <location>
        <begin position="136"/>
        <end position="139"/>
    </location>
</feature>
<feature type="region of interest" description="G5" evidence="1">
    <location>
        <begin position="174"/>
        <end position="176"/>
    </location>
</feature>
<feature type="binding site" evidence="2">
    <location>
        <begin position="19"/>
        <end position="26"/>
    </location>
    <ligand>
        <name>GTP</name>
        <dbReference type="ChEBI" id="CHEBI:37565"/>
    </ligand>
</feature>
<feature type="binding site" evidence="2">
    <location>
        <position position="26"/>
    </location>
    <ligand>
        <name>Mg(2+)</name>
        <dbReference type="ChEBI" id="CHEBI:18420"/>
    </ligand>
</feature>
<feature type="binding site" evidence="2">
    <location>
        <begin position="81"/>
        <end position="85"/>
    </location>
    <ligand>
        <name>GTP</name>
        <dbReference type="ChEBI" id="CHEBI:37565"/>
    </ligand>
</feature>
<feature type="binding site" evidence="2">
    <location>
        <begin position="136"/>
        <end position="139"/>
    </location>
    <ligand>
        <name>GTP</name>
        <dbReference type="ChEBI" id="CHEBI:37565"/>
    </ligand>
</feature>
<proteinExistence type="inferred from homology"/>
<keyword id="KW-0963">Cytoplasm</keyword>
<keyword id="KW-0251">Elongation factor</keyword>
<keyword id="KW-0342">GTP-binding</keyword>
<keyword id="KW-0378">Hydrolase</keyword>
<keyword id="KW-0460">Magnesium</keyword>
<keyword id="KW-0479">Metal-binding</keyword>
<keyword id="KW-0547">Nucleotide-binding</keyword>
<keyword id="KW-0648">Protein biosynthesis</keyword>
<keyword id="KW-1185">Reference proteome</keyword>
<name>EFTU2_SHEON</name>